<evidence type="ECO:0000255" key="1">
    <source>
        <dbReference type="HAMAP-Rule" id="MF_00135"/>
    </source>
</evidence>
<comment type="catalytic activity">
    <reaction evidence="1">
        <text>N-(5-phospho-beta-D-ribosyl)anthranilate = 1-(2-carboxyphenylamino)-1-deoxy-D-ribulose 5-phosphate</text>
        <dbReference type="Rhea" id="RHEA:21540"/>
        <dbReference type="ChEBI" id="CHEBI:18277"/>
        <dbReference type="ChEBI" id="CHEBI:58613"/>
        <dbReference type="EC" id="5.3.1.24"/>
    </reaction>
</comment>
<comment type="pathway">
    <text evidence="1">Amino-acid biosynthesis; L-tryptophan biosynthesis; L-tryptophan from chorismate: step 3/5.</text>
</comment>
<comment type="similarity">
    <text evidence="1">Belongs to the TrpF family.</text>
</comment>
<reference key="1">
    <citation type="submission" date="2007-10" db="EMBL/GenBank/DDBJ databases">
        <title>Complete sequence of chromosome of Desulforudis audaxviator MP104C.</title>
        <authorList>
            <person name="Copeland A."/>
            <person name="Lucas S."/>
            <person name="Lapidus A."/>
            <person name="Barry K."/>
            <person name="Glavina del Rio T."/>
            <person name="Dalin E."/>
            <person name="Tice H."/>
            <person name="Bruce D."/>
            <person name="Pitluck S."/>
            <person name="Lowry S.R."/>
            <person name="Larimer F."/>
            <person name="Land M.L."/>
            <person name="Hauser L."/>
            <person name="Kyrpides N."/>
            <person name="Ivanova N.N."/>
            <person name="Richardson P."/>
        </authorList>
    </citation>
    <scope>NUCLEOTIDE SEQUENCE [LARGE SCALE GENOMIC DNA]</scope>
    <source>
        <strain>MP104C</strain>
    </source>
</reference>
<keyword id="KW-0028">Amino-acid biosynthesis</keyword>
<keyword id="KW-0057">Aromatic amino acid biosynthesis</keyword>
<keyword id="KW-0413">Isomerase</keyword>
<keyword id="KW-1185">Reference proteome</keyword>
<keyword id="KW-0822">Tryptophan biosynthesis</keyword>
<accession>B1I3Z6</accession>
<protein>
    <recommendedName>
        <fullName evidence="1">N-(5'-phosphoribosyl)anthranilate isomerase</fullName>
        <shortName evidence="1">PRAI</shortName>
        <ecNumber evidence="1">5.3.1.24</ecNumber>
    </recommendedName>
</protein>
<feature type="chain" id="PRO_1000095920" description="N-(5'-phosphoribosyl)anthranilate isomerase">
    <location>
        <begin position="1"/>
        <end position="204"/>
    </location>
</feature>
<sequence>MTLVKICGITDLDTARTAVDAGADALGFVFAPGRRRIAPDTARAIIRRLPPEVLTVGVFVDEDPETVQGIAAHCGLGALQFHGRESPEYCRGFREKVIKAFGVGNASVRELERAEEYPVWCLLLDTFSPGRPGGTGRVFDWRLIESLKFSRPVILAGGLNPGNVQAAIAAVRPYGVDVSTGVETGGLKDPAKIRSFIKLAREAL</sequence>
<proteinExistence type="inferred from homology"/>
<gene>
    <name evidence="1" type="primary">trpF</name>
    <name type="ordered locus">Daud_1187</name>
</gene>
<dbReference type="EC" id="5.3.1.24" evidence="1"/>
<dbReference type="EMBL" id="CP000860">
    <property type="protein sequence ID" value="ACA59698.1"/>
    <property type="molecule type" value="Genomic_DNA"/>
</dbReference>
<dbReference type="RefSeq" id="WP_012302284.1">
    <property type="nucleotide sequence ID" value="NC_010424.1"/>
</dbReference>
<dbReference type="SMR" id="B1I3Z6"/>
<dbReference type="STRING" id="477974.Daud_1187"/>
<dbReference type="KEGG" id="dau:Daud_1187"/>
<dbReference type="eggNOG" id="COG0135">
    <property type="taxonomic scope" value="Bacteria"/>
</dbReference>
<dbReference type="HOGENOM" id="CLU_076364_2_0_9"/>
<dbReference type="OrthoDB" id="9786954at2"/>
<dbReference type="UniPathway" id="UPA00035">
    <property type="reaction ID" value="UER00042"/>
</dbReference>
<dbReference type="Proteomes" id="UP000008544">
    <property type="component" value="Chromosome"/>
</dbReference>
<dbReference type="GO" id="GO:0004640">
    <property type="term" value="F:phosphoribosylanthranilate isomerase activity"/>
    <property type="evidence" value="ECO:0007669"/>
    <property type="project" value="UniProtKB-UniRule"/>
</dbReference>
<dbReference type="GO" id="GO:0000162">
    <property type="term" value="P:L-tryptophan biosynthetic process"/>
    <property type="evidence" value="ECO:0007669"/>
    <property type="project" value="UniProtKB-UniRule"/>
</dbReference>
<dbReference type="CDD" id="cd00405">
    <property type="entry name" value="PRAI"/>
    <property type="match status" value="1"/>
</dbReference>
<dbReference type="FunFam" id="3.20.20.70:FF:000075">
    <property type="entry name" value="Tryptophan biosynthesis protein TRP1"/>
    <property type="match status" value="1"/>
</dbReference>
<dbReference type="Gene3D" id="3.20.20.70">
    <property type="entry name" value="Aldolase class I"/>
    <property type="match status" value="1"/>
</dbReference>
<dbReference type="HAMAP" id="MF_00135">
    <property type="entry name" value="PRAI"/>
    <property type="match status" value="1"/>
</dbReference>
<dbReference type="InterPro" id="IPR013785">
    <property type="entry name" value="Aldolase_TIM"/>
</dbReference>
<dbReference type="InterPro" id="IPR001240">
    <property type="entry name" value="PRAI_dom"/>
</dbReference>
<dbReference type="InterPro" id="IPR011060">
    <property type="entry name" value="RibuloseP-bd_barrel"/>
</dbReference>
<dbReference type="InterPro" id="IPR044643">
    <property type="entry name" value="TrpF_fam"/>
</dbReference>
<dbReference type="NCBIfam" id="NF002298">
    <property type="entry name" value="PRK01222.1-4"/>
    <property type="match status" value="1"/>
</dbReference>
<dbReference type="PANTHER" id="PTHR42894">
    <property type="entry name" value="N-(5'-PHOSPHORIBOSYL)ANTHRANILATE ISOMERASE"/>
    <property type="match status" value="1"/>
</dbReference>
<dbReference type="PANTHER" id="PTHR42894:SF1">
    <property type="entry name" value="N-(5'-PHOSPHORIBOSYL)ANTHRANILATE ISOMERASE"/>
    <property type="match status" value="1"/>
</dbReference>
<dbReference type="Pfam" id="PF00697">
    <property type="entry name" value="PRAI"/>
    <property type="match status" value="1"/>
</dbReference>
<dbReference type="SUPFAM" id="SSF51366">
    <property type="entry name" value="Ribulose-phoshate binding barrel"/>
    <property type="match status" value="1"/>
</dbReference>
<name>TRPF_DESAP</name>
<organism>
    <name type="scientific">Desulforudis audaxviator (strain MP104C)</name>
    <dbReference type="NCBI Taxonomy" id="477974"/>
    <lineage>
        <taxon>Bacteria</taxon>
        <taxon>Bacillati</taxon>
        <taxon>Bacillota</taxon>
        <taxon>Clostridia</taxon>
        <taxon>Thermoanaerobacterales</taxon>
        <taxon>Candidatus Desulforudaceae</taxon>
        <taxon>Candidatus Desulforudis</taxon>
    </lineage>
</organism>